<sequence>MTKSQQKLASIEQLSNQDGIISALAFDQRGALKRMMAEHQTEPPTVEQIEQLKVLVSEELTQYASSILLDPEYGLPASDARNKECGLLLAYEKTGYDVNAKGRLPDCLVEWSAKRLKEQGANAVKFLLYYDVDDSEEINIQKKAYIERIGSECVAEDIPFFLEVLTYDDNIPDNKSAEFAKVKPRKVNEAMKLFSEDRFNVDVLKVEVPVNMNFVEGFTEGEVVYTKEEAAQHFRDQEAATHLPYIYLSAGVSAELFQETLTFAHDAGAHFNGVLCGRATWSGAVKVYIEQGEQAAREWLRTTGYKNIDDLNKVLKTTATSWKAK</sequence>
<proteinExistence type="inferred from homology"/>
<comment type="catalytic activity">
    <reaction evidence="1">
        <text>D-tagatofuranose 1,6-bisphosphate = D-glyceraldehyde 3-phosphate + dihydroxyacetone phosphate</text>
        <dbReference type="Rhea" id="RHEA:22948"/>
        <dbReference type="ChEBI" id="CHEBI:57642"/>
        <dbReference type="ChEBI" id="CHEBI:58694"/>
        <dbReference type="ChEBI" id="CHEBI:59776"/>
        <dbReference type="EC" id="4.1.2.40"/>
    </reaction>
</comment>
<comment type="pathway">
    <text evidence="1">Carbohydrate metabolism; D-tagatose 6-phosphate degradation; D-glyceraldehyde 3-phosphate and glycerone phosphate from D-tagatose 6-phosphate: step 2/2.</text>
</comment>
<comment type="similarity">
    <text evidence="1">Belongs to the aldolase LacD family.</text>
</comment>
<organism>
    <name type="scientific">Staphylococcus haemolyticus (strain JCSC1435)</name>
    <dbReference type="NCBI Taxonomy" id="279808"/>
    <lineage>
        <taxon>Bacteria</taxon>
        <taxon>Bacillati</taxon>
        <taxon>Bacillota</taxon>
        <taxon>Bacilli</taxon>
        <taxon>Bacillales</taxon>
        <taxon>Staphylococcaceae</taxon>
        <taxon>Staphylococcus</taxon>
    </lineage>
</organism>
<protein>
    <recommendedName>
        <fullName evidence="1">Tagatose 1,6-diphosphate aldolase</fullName>
        <ecNumber evidence="1">4.1.2.40</ecNumber>
    </recommendedName>
    <alternativeName>
        <fullName evidence="1">D-tagatose-1,6-bisphosphate aldolase</fullName>
    </alternativeName>
    <alternativeName>
        <fullName evidence="1">Tagatose-bisphosphate aldolase</fullName>
    </alternativeName>
</protein>
<reference key="1">
    <citation type="journal article" date="2005" name="J. Bacteriol.">
        <title>Whole-genome sequencing of Staphylococcus haemolyticus uncovers the extreme plasticity of its genome and the evolution of human-colonizing staphylococcal species.</title>
        <authorList>
            <person name="Takeuchi F."/>
            <person name="Watanabe S."/>
            <person name="Baba T."/>
            <person name="Yuzawa H."/>
            <person name="Ito T."/>
            <person name="Morimoto Y."/>
            <person name="Kuroda M."/>
            <person name="Cui L."/>
            <person name="Takahashi M."/>
            <person name="Ankai A."/>
            <person name="Baba S."/>
            <person name="Fukui S."/>
            <person name="Lee J.C."/>
            <person name="Hiramatsu K."/>
        </authorList>
    </citation>
    <scope>NUCLEOTIDE SEQUENCE [LARGE SCALE GENOMIC DNA]</scope>
    <source>
        <strain>JCSC1435</strain>
    </source>
</reference>
<evidence type="ECO:0000255" key="1">
    <source>
        <dbReference type="HAMAP-Rule" id="MF_00734"/>
    </source>
</evidence>
<accession>Q4L871</accession>
<feature type="chain" id="PRO_0000203953" description="Tagatose 1,6-diphosphate aldolase">
    <location>
        <begin position="1"/>
        <end position="325"/>
    </location>
</feature>
<gene>
    <name evidence="1" type="primary">lacD</name>
    <name type="ordered locus">SH0845</name>
</gene>
<dbReference type="EC" id="4.1.2.40" evidence="1"/>
<dbReference type="EMBL" id="AP006716">
    <property type="protein sequence ID" value="BAE04154.1"/>
    <property type="molecule type" value="Genomic_DNA"/>
</dbReference>
<dbReference type="RefSeq" id="WP_011275158.1">
    <property type="nucleotide sequence ID" value="NC_007168.1"/>
</dbReference>
<dbReference type="SMR" id="Q4L871"/>
<dbReference type="GeneID" id="58106727"/>
<dbReference type="KEGG" id="sha:SH0845"/>
<dbReference type="eggNOG" id="COG3684">
    <property type="taxonomic scope" value="Bacteria"/>
</dbReference>
<dbReference type="HOGENOM" id="CLU_058971_0_1_9"/>
<dbReference type="OrthoDB" id="106309at2"/>
<dbReference type="UniPathway" id="UPA00704">
    <property type="reaction ID" value="UER00716"/>
</dbReference>
<dbReference type="Proteomes" id="UP000000543">
    <property type="component" value="Chromosome"/>
</dbReference>
<dbReference type="GO" id="GO:0061595">
    <property type="term" value="F:6-deoxy-6-sulfofructose-1-phosphate aldolase activity"/>
    <property type="evidence" value="ECO:0007669"/>
    <property type="project" value="TreeGrafter"/>
</dbReference>
<dbReference type="GO" id="GO:0009024">
    <property type="term" value="F:tagatose-6-phosphate kinase activity"/>
    <property type="evidence" value="ECO:0007669"/>
    <property type="project" value="InterPro"/>
</dbReference>
<dbReference type="GO" id="GO:0009025">
    <property type="term" value="F:tagatose-bisphosphate aldolase activity"/>
    <property type="evidence" value="ECO:0007669"/>
    <property type="project" value="UniProtKB-UniRule"/>
</dbReference>
<dbReference type="GO" id="GO:1902777">
    <property type="term" value="P:6-sulfoquinovose(1-) catabolic process"/>
    <property type="evidence" value="ECO:0007669"/>
    <property type="project" value="TreeGrafter"/>
</dbReference>
<dbReference type="GO" id="GO:2001059">
    <property type="term" value="P:D-tagatose 6-phosphate catabolic process"/>
    <property type="evidence" value="ECO:0007669"/>
    <property type="project" value="UniProtKB-UniRule"/>
</dbReference>
<dbReference type="GO" id="GO:0019512">
    <property type="term" value="P:lactose catabolic process via tagatose-6-phosphate"/>
    <property type="evidence" value="ECO:0007669"/>
    <property type="project" value="InterPro"/>
</dbReference>
<dbReference type="FunFam" id="3.20.20.70:FF:000137">
    <property type="entry name" value="Tagatose 1,6-diphosphate aldolase 2"/>
    <property type="match status" value="1"/>
</dbReference>
<dbReference type="Gene3D" id="3.20.20.70">
    <property type="entry name" value="Aldolase class I"/>
    <property type="match status" value="1"/>
</dbReference>
<dbReference type="HAMAP" id="MF_00734">
    <property type="entry name" value="LacD"/>
    <property type="match status" value="1"/>
</dbReference>
<dbReference type="InterPro" id="IPR013785">
    <property type="entry name" value="Aldolase_TIM"/>
</dbReference>
<dbReference type="InterPro" id="IPR002915">
    <property type="entry name" value="DeoC/FbaB/LacD_aldolase"/>
</dbReference>
<dbReference type="InterPro" id="IPR050552">
    <property type="entry name" value="LacD_aldolase"/>
</dbReference>
<dbReference type="InterPro" id="IPR005927">
    <property type="entry name" value="Tag_1.6-dipho_adolase"/>
</dbReference>
<dbReference type="NCBIfam" id="TIGR01232">
    <property type="entry name" value="lacD"/>
    <property type="match status" value="1"/>
</dbReference>
<dbReference type="NCBIfam" id="NF003180">
    <property type="entry name" value="PRK04161.1"/>
    <property type="match status" value="1"/>
</dbReference>
<dbReference type="NCBIfam" id="NF009065">
    <property type="entry name" value="PRK12399.1"/>
    <property type="match status" value="1"/>
</dbReference>
<dbReference type="NCBIfam" id="NF009498">
    <property type="entry name" value="PRK12858.1"/>
    <property type="match status" value="1"/>
</dbReference>
<dbReference type="PANTHER" id="PTHR39340">
    <property type="entry name" value="SULFOFRUCTOSEPHOSPHATE ALDOLASE"/>
    <property type="match status" value="1"/>
</dbReference>
<dbReference type="PANTHER" id="PTHR39340:SF1">
    <property type="entry name" value="SULFOFRUCTOSEPHOSPHATE ALDOLASE"/>
    <property type="match status" value="1"/>
</dbReference>
<dbReference type="Pfam" id="PF01791">
    <property type="entry name" value="DeoC"/>
    <property type="match status" value="1"/>
</dbReference>
<dbReference type="SMART" id="SM01133">
    <property type="entry name" value="DeoC"/>
    <property type="match status" value="1"/>
</dbReference>
<dbReference type="SUPFAM" id="SSF51569">
    <property type="entry name" value="Aldolase"/>
    <property type="match status" value="1"/>
</dbReference>
<keyword id="KW-0423">Lactose metabolism</keyword>
<keyword id="KW-0456">Lyase</keyword>
<name>LACD_STAHJ</name>